<keyword id="KW-0028">Amino-acid biosynthesis</keyword>
<keyword id="KW-0963">Cytoplasm</keyword>
<keyword id="KW-0368">Histidine biosynthesis</keyword>
<keyword id="KW-0456">Lyase</keyword>
<evidence type="ECO:0000255" key="1">
    <source>
        <dbReference type="HAMAP-Rule" id="MF_00076"/>
    </source>
</evidence>
<evidence type="ECO:0000305" key="2"/>
<reference key="1">
    <citation type="submission" date="2007-05" db="EMBL/GenBank/DDBJ databases">
        <title>Complete sequence of Pseudomonas putida F1.</title>
        <authorList>
            <consortium name="US DOE Joint Genome Institute"/>
            <person name="Copeland A."/>
            <person name="Lucas S."/>
            <person name="Lapidus A."/>
            <person name="Barry K."/>
            <person name="Detter J.C."/>
            <person name="Glavina del Rio T."/>
            <person name="Hammon N."/>
            <person name="Israni S."/>
            <person name="Dalin E."/>
            <person name="Tice H."/>
            <person name="Pitluck S."/>
            <person name="Chain P."/>
            <person name="Malfatti S."/>
            <person name="Shin M."/>
            <person name="Vergez L."/>
            <person name="Schmutz J."/>
            <person name="Larimer F."/>
            <person name="Land M."/>
            <person name="Hauser L."/>
            <person name="Kyrpides N."/>
            <person name="Lykidis A."/>
            <person name="Parales R."/>
            <person name="Richardson P."/>
        </authorList>
    </citation>
    <scope>NUCLEOTIDE SEQUENCE [LARGE SCALE GENOMIC DNA]</scope>
    <source>
        <strain>ATCC 700007 / DSM 6899 / JCM 31910 / BCRC 17059 / LMG 24140 / F1</strain>
    </source>
</reference>
<organism>
    <name type="scientific">Pseudomonas putida (strain ATCC 700007 / DSM 6899 / JCM 31910 / BCRC 17059 / LMG 24140 / F1)</name>
    <dbReference type="NCBI Taxonomy" id="351746"/>
    <lineage>
        <taxon>Bacteria</taxon>
        <taxon>Pseudomonadati</taxon>
        <taxon>Pseudomonadota</taxon>
        <taxon>Gammaproteobacteria</taxon>
        <taxon>Pseudomonadales</taxon>
        <taxon>Pseudomonadaceae</taxon>
        <taxon>Pseudomonas</taxon>
    </lineage>
</organism>
<gene>
    <name evidence="1" type="primary">hisB</name>
    <name type="ordered locus">Pput_0309</name>
</gene>
<dbReference type="EC" id="4.2.1.19" evidence="1"/>
<dbReference type="EMBL" id="CP000712">
    <property type="protein sequence ID" value="ABQ76482.1"/>
    <property type="status" value="ALT_INIT"/>
    <property type="molecule type" value="Genomic_DNA"/>
</dbReference>
<dbReference type="SMR" id="A5VX72"/>
<dbReference type="KEGG" id="ppf:Pput_0309"/>
<dbReference type="eggNOG" id="COG0131">
    <property type="taxonomic scope" value="Bacteria"/>
</dbReference>
<dbReference type="HOGENOM" id="CLU_044308_2_0_6"/>
<dbReference type="UniPathway" id="UPA00031">
    <property type="reaction ID" value="UER00011"/>
</dbReference>
<dbReference type="GO" id="GO:0005737">
    <property type="term" value="C:cytoplasm"/>
    <property type="evidence" value="ECO:0007669"/>
    <property type="project" value="UniProtKB-SubCell"/>
</dbReference>
<dbReference type="GO" id="GO:0004424">
    <property type="term" value="F:imidazoleglycerol-phosphate dehydratase activity"/>
    <property type="evidence" value="ECO:0007669"/>
    <property type="project" value="UniProtKB-UniRule"/>
</dbReference>
<dbReference type="GO" id="GO:0000105">
    <property type="term" value="P:L-histidine biosynthetic process"/>
    <property type="evidence" value="ECO:0007669"/>
    <property type="project" value="UniProtKB-UniRule"/>
</dbReference>
<dbReference type="CDD" id="cd07914">
    <property type="entry name" value="IGPD"/>
    <property type="match status" value="1"/>
</dbReference>
<dbReference type="FunFam" id="3.30.230.40:FF:000002">
    <property type="entry name" value="Imidazoleglycerol-phosphate dehydratase"/>
    <property type="match status" value="1"/>
</dbReference>
<dbReference type="FunFam" id="3.30.230.40:FF:000003">
    <property type="entry name" value="Imidazoleglycerol-phosphate dehydratase HisB"/>
    <property type="match status" value="1"/>
</dbReference>
<dbReference type="Gene3D" id="3.30.230.40">
    <property type="entry name" value="Imidazole glycerol phosphate dehydratase, domain 1"/>
    <property type="match status" value="2"/>
</dbReference>
<dbReference type="HAMAP" id="MF_00076">
    <property type="entry name" value="HisB"/>
    <property type="match status" value="1"/>
</dbReference>
<dbReference type="InterPro" id="IPR038494">
    <property type="entry name" value="IGPD_sf"/>
</dbReference>
<dbReference type="InterPro" id="IPR000807">
    <property type="entry name" value="ImidazoleglycerolP_deHydtase"/>
</dbReference>
<dbReference type="InterPro" id="IPR020565">
    <property type="entry name" value="ImidazoleglycerP_deHydtase_CS"/>
</dbReference>
<dbReference type="InterPro" id="IPR020568">
    <property type="entry name" value="Ribosomal_Su5_D2-typ_SF"/>
</dbReference>
<dbReference type="NCBIfam" id="NF002106">
    <property type="entry name" value="PRK00951.1-1"/>
    <property type="match status" value="1"/>
</dbReference>
<dbReference type="NCBIfam" id="NF002111">
    <property type="entry name" value="PRK00951.2-1"/>
    <property type="match status" value="1"/>
</dbReference>
<dbReference type="NCBIfam" id="NF002114">
    <property type="entry name" value="PRK00951.2-4"/>
    <property type="match status" value="1"/>
</dbReference>
<dbReference type="PANTHER" id="PTHR23133:SF2">
    <property type="entry name" value="IMIDAZOLEGLYCEROL-PHOSPHATE DEHYDRATASE"/>
    <property type="match status" value="1"/>
</dbReference>
<dbReference type="PANTHER" id="PTHR23133">
    <property type="entry name" value="IMIDAZOLEGLYCEROL-PHOSPHATE DEHYDRATASE HIS7"/>
    <property type="match status" value="1"/>
</dbReference>
<dbReference type="Pfam" id="PF00475">
    <property type="entry name" value="IGPD"/>
    <property type="match status" value="1"/>
</dbReference>
<dbReference type="SUPFAM" id="SSF54211">
    <property type="entry name" value="Ribosomal protein S5 domain 2-like"/>
    <property type="match status" value="2"/>
</dbReference>
<dbReference type="PROSITE" id="PS00954">
    <property type="entry name" value="IGP_DEHYDRATASE_1"/>
    <property type="match status" value="1"/>
</dbReference>
<dbReference type="PROSITE" id="PS00955">
    <property type="entry name" value="IGP_DEHYDRATASE_2"/>
    <property type="match status" value="1"/>
</dbReference>
<feature type="chain" id="PRO_0000336335" description="Imidazoleglycerol-phosphate dehydratase">
    <location>
        <begin position="1"/>
        <end position="197"/>
    </location>
</feature>
<accession>A5VX72</accession>
<name>HIS7_PSEP1</name>
<comment type="catalytic activity">
    <reaction evidence="1">
        <text>D-erythro-1-(imidazol-4-yl)glycerol 3-phosphate = 3-(imidazol-4-yl)-2-oxopropyl phosphate + H2O</text>
        <dbReference type="Rhea" id="RHEA:11040"/>
        <dbReference type="ChEBI" id="CHEBI:15377"/>
        <dbReference type="ChEBI" id="CHEBI:57766"/>
        <dbReference type="ChEBI" id="CHEBI:58278"/>
        <dbReference type="EC" id="4.2.1.19"/>
    </reaction>
</comment>
<comment type="pathway">
    <text evidence="1">Amino-acid biosynthesis; L-histidine biosynthesis; L-histidine from 5-phospho-alpha-D-ribose 1-diphosphate: step 6/9.</text>
</comment>
<comment type="subcellular location">
    <subcellularLocation>
        <location evidence="1">Cytoplasm</location>
    </subcellularLocation>
</comment>
<comment type="similarity">
    <text evidence="1">Belongs to the imidazoleglycerol-phosphate dehydratase family.</text>
</comment>
<comment type="sequence caution" evidence="2">
    <conflict type="erroneous initiation">
        <sequence resource="EMBL-CDS" id="ABQ76482"/>
    </conflict>
</comment>
<sequence>MVERKASVERNTLETQVKCSINLDGSGKARFDIGVPFLEHMLDQIARHGLIDLDIECKGDTHIDDHHTVEDVGITLGMAFAQAIGDKKGIFRYGHAYVPLDEALSRVVIDFSGRPGLQMHVPYTRASVGGFDVDLFQEFFQGFVNHALVTLHIDNLRGHNTHHQIETVFKAFGRALRMAITLDERMAGQMPSTKGCL</sequence>
<proteinExistence type="inferred from homology"/>
<protein>
    <recommendedName>
        <fullName evidence="1">Imidazoleglycerol-phosphate dehydratase</fullName>
        <shortName evidence="1">IGPD</shortName>
        <ecNumber evidence="1">4.2.1.19</ecNumber>
    </recommendedName>
</protein>